<feature type="chain" id="PRO_1000022140" description="Isoleucine--tRNA ligase">
    <location>
        <begin position="1"/>
        <end position="955"/>
    </location>
</feature>
<feature type="short sequence motif" description="'HIGH' region">
    <location>
        <begin position="58"/>
        <end position="68"/>
    </location>
</feature>
<feature type="short sequence motif" description="'KMSKS' region">
    <location>
        <begin position="593"/>
        <end position="597"/>
    </location>
</feature>
<feature type="binding site" evidence="1">
    <location>
        <position position="552"/>
    </location>
    <ligand>
        <name>L-isoleucyl-5'-AMP</name>
        <dbReference type="ChEBI" id="CHEBI:178002"/>
    </ligand>
</feature>
<feature type="binding site" evidence="1">
    <location>
        <position position="596"/>
    </location>
    <ligand>
        <name>ATP</name>
        <dbReference type="ChEBI" id="CHEBI:30616"/>
    </ligand>
</feature>
<feature type="binding site" evidence="1">
    <location>
        <position position="918"/>
    </location>
    <ligand>
        <name>Zn(2+)</name>
        <dbReference type="ChEBI" id="CHEBI:29105"/>
    </ligand>
</feature>
<feature type="binding site" evidence="1">
    <location>
        <position position="921"/>
    </location>
    <ligand>
        <name>Zn(2+)</name>
        <dbReference type="ChEBI" id="CHEBI:29105"/>
    </ligand>
</feature>
<feature type="binding site" evidence="1">
    <location>
        <position position="938"/>
    </location>
    <ligand>
        <name>Zn(2+)</name>
        <dbReference type="ChEBI" id="CHEBI:29105"/>
    </ligand>
</feature>
<feature type="binding site" evidence="1">
    <location>
        <position position="941"/>
    </location>
    <ligand>
        <name>Zn(2+)</name>
        <dbReference type="ChEBI" id="CHEBI:29105"/>
    </ligand>
</feature>
<organism>
    <name type="scientific">Vesicomyosocius okutanii subsp. Calyptogena okutanii (strain HA)</name>
    <dbReference type="NCBI Taxonomy" id="412965"/>
    <lineage>
        <taxon>Bacteria</taxon>
        <taxon>Pseudomonadati</taxon>
        <taxon>Pseudomonadota</taxon>
        <taxon>Gammaproteobacteria</taxon>
        <taxon>Candidatus Pseudothioglobaceae</taxon>
        <taxon>Candidatus Vesicomyosocius</taxon>
    </lineage>
</organism>
<keyword id="KW-0030">Aminoacyl-tRNA synthetase</keyword>
<keyword id="KW-0067">ATP-binding</keyword>
<keyword id="KW-0963">Cytoplasm</keyword>
<keyword id="KW-0436">Ligase</keyword>
<keyword id="KW-0479">Metal-binding</keyword>
<keyword id="KW-0547">Nucleotide-binding</keyword>
<keyword id="KW-0648">Protein biosynthesis</keyword>
<keyword id="KW-1185">Reference proteome</keyword>
<keyword id="KW-0862">Zinc</keyword>
<dbReference type="EC" id="6.1.1.5" evidence="1"/>
<dbReference type="EMBL" id="AP009247">
    <property type="protein sequence ID" value="BAF61447.1"/>
    <property type="molecule type" value="Genomic_DNA"/>
</dbReference>
<dbReference type="RefSeq" id="WP_011929717.1">
    <property type="nucleotide sequence ID" value="NC_009465.1"/>
</dbReference>
<dbReference type="SMR" id="A5CX61"/>
<dbReference type="STRING" id="412965.COSY_0322"/>
<dbReference type="KEGG" id="vok:COSY_0322"/>
<dbReference type="eggNOG" id="COG0060">
    <property type="taxonomic scope" value="Bacteria"/>
</dbReference>
<dbReference type="HOGENOM" id="CLU_001493_7_0_6"/>
<dbReference type="OrthoDB" id="9810365at2"/>
<dbReference type="Proteomes" id="UP000000247">
    <property type="component" value="Chromosome"/>
</dbReference>
<dbReference type="GO" id="GO:0005829">
    <property type="term" value="C:cytosol"/>
    <property type="evidence" value="ECO:0007669"/>
    <property type="project" value="TreeGrafter"/>
</dbReference>
<dbReference type="GO" id="GO:0002161">
    <property type="term" value="F:aminoacyl-tRNA deacylase activity"/>
    <property type="evidence" value="ECO:0007669"/>
    <property type="project" value="InterPro"/>
</dbReference>
<dbReference type="GO" id="GO:0005524">
    <property type="term" value="F:ATP binding"/>
    <property type="evidence" value="ECO:0007669"/>
    <property type="project" value="UniProtKB-UniRule"/>
</dbReference>
<dbReference type="GO" id="GO:0004822">
    <property type="term" value="F:isoleucine-tRNA ligase activity"/>
    <property type="evidence" value="ECO:0007669"/>
    <property type="project" value="UniProtKB-UniRule"/>
</dbReference>
<dbReference type="GO" id="GO:0000049">
    <property type="term" value="F:tRNA binding"/>
    <property type="evidence" value="ECO:0007669"/>
    <property type="project" value="InterPro"/>
</dbReference>
<dbReference type="GO" id="GO:0008270">
    <property type="term" value="F:zinc ion binding"/>
    <property type="evidence" value="ECO:0007669"/>
    <property type="project" value="UniProtKB-UniRule"/>
</dbReference>
<dbReference type="GO" id="GO:0006428">
    <property type="term" value="P:isoleucyl-tRNA aminoacylation"/>
    <property type="evidence" value="ECO:0007669"/>
    <property type="project" value="UniProtKB-UniRule"/>
</dbReference>
<dbReference type="CDD" id="cd07960">
    <property type="entry name" value="Anticodon_Ia_Ile_BEm"/>
    <property type="match status" value="1"/>
</dbReference>
<dbReference type="CDD" id="cd00818">
    <property type="entry name" value="IleRS_core"/>
    <property type="match status" value="1"/>
</dbReference>
<dbReference type="FunFam" id="3.40.50.620:FF:000042">
    <property type="entry name" value="Isoleucine--tRNA ligase"/>
    <property type="match status" value="1"/>
</dbReference>
<dbReference type="FunFam" id="3.40.50.620:FF:000048">
    <property type="entry name" value="Isoleucine--tRNA ligase"/>
    <property type="match status" value="1"/>
</dbReference>
<dbReference type="Gene3D" id="1.10.730.20">
    <property type="match status" value="1"/>
</dbReference>
<dbReference type="Gene3D" id="3.40.50.620">
    <property type="entry name" value="HUPs"/>
    <property type="match status" value="2"/>
</dbReference>
<dbReference type="Gene3D" id="3.90.740.10">
    <property type="entry name" value="Valyl/Leucyl/Isoleucyl-tRNA synthetase, editing domain"/>
    <property type="match status" value="1"/>
</dbReference>
<dbReference type="HAMAP" id="MF_02002">
    <property type="entry name" value="Ile_tRNA_synth_type1"/>
    <property type="match status" value="1"/>
</dbReference>
<dbReference type="InterPro" id="IPR002300">
    <property type="entry name" value="aa-tRNA-synth_Ia"/>
</dbReference>
<dbReference type="InterPro" id="IPR033708">
    <property type="entry name" value="Anticodon_Ile_BEm"/>
</dbReference>
<dbReference type="InterPro" id="IPR002301">
    <property type="entry name" value="Ile-tRNA-ligase"/>
</dbReference>
<dbReference type="InterPro" id="IPR023585">
    <property type="entry name" value="Ile-tRNA-ligase_type1"/>
</dbReference>
<dbReference type="InterPro" id="IPR050081">
    <property type="entry name" value="Ile-tRNA_ligase"/>
</dbReference>
<dbReference type="InterPro" id="IPR013155">
    <property type="entry name" value="M/V/L/I-tRNA-synth_anticd-bd"/>
</dbReference>
<dbReference type="InterPro" id="IPR014729">
    <property type="entry name" value="Rossmann-like_a/b/a_fold"/>
</dbReference>
<dbReference type="InterPro" id="IPR009080">
    <property type="entry name" value="tRNAsynth_Ia_anticodon-bd"/>
</dbReference>
<dbReference type="InterPro" id="IPR009008">
    <property type="entry name" value="Val/Leu/Ile-tRNA-synth_edit"/>
</dbReference>
<dbReference type="InterPro" id="IPR010663">
    <property type="entry name" value="Znf_FPG/IleRS"/>
</dbReference>
<dbReference type="NCBIfam" id="TIGR00392">
    <property type="entry name" value="ileS"/>
    <property type="match status" value="1"/>
</dbReference>
<dbReference type="PANTHER" id="PTHR42765:SF1">
    <property type="entry name" value="ISOLEUCINE--TRNA LIGASE, MITOCHONDRIAL"/>
    <property type="match status" value="1"/>
</dbReference>
<dbReference type="PANTHER" id="PTHR42765">
    <property type="entry name" value="SOLEUCYL-TRNA SYNTHETASE"/>
    <property type="match status" value="1"/>
</dbReference>
<dbReference type="Pfam" id="PF08264">
    <property type="entry name" value="Anticodon_1"/>
    <property type="match status" value="1"/>
</dbReference>
<dbReference type="Pfam" id="PF00133">
    <property type="entry name" value="tRNA-synt_1"/>
    <property type="match status" value="1"/>
</dbReference>
<dbReference type="Pfam" id="PF06827">
    <property type="entry name" value="zf-FPG_IleRS"/>
    <property type="match status" value="1"/>
</dbReference>
<dbReference type="PRINTS" id="PR00984">
    <property type="entry name" value="TRNASYNTHILE"/>
</dbReference>
<dbReference type="SUPFAM" id="SSF47323">
    <property type="entry name" value="Anticodon-binding domain of a subclass of class I aminoacyl-tRNA synthetases"/>
    <property type="match status" value="1"/>
</dbReference>
<dbReference type="SUPFAM" id="SSF52374">
    <property type="entry name" value="Nucleotidylyl transferase"/>
    <property type="match status" value="1"/>
</dbReference>
<dbReference type="SUPFAM" id="SSF50677">
    <property type="entry name" value="ValRS/IleRS/LeuRS editing domain"/>
    <property type="match status" value="1"/>
</dbReference>
<gene>
    <name evidence="1" type="primary">ileS</name>
    <name type="ordered locus">COSY_0322</name>
</gene>
<reference key="1">
    <citation type="journal article" date="2007" name="Curr. Biol.">
        <title>Reduced genome of the thioautotrophic intracellular symbiont in a deep-sea clam, Calyptogena okutanii.</title>
        <authorList>
            <person name="Kuwahara H."/>
            <person name="Yoshida T."/>
            <person name="Takaki Y."/>
            <person name="Shimamura S."/>
            <person name="Nishi S."/>
            <person name="Harada M."/>
            <person name="Matsuyama K."/>
            <person name="Takishita K."/>
            <person name="Kawato M."/>
            <person name="Uematsu K."/>
            <person name="Fujiwara Y."/>
            <person name="Sato T."/>
            <person name="Kato C."/>
            <person name="Kitagawa M."/>
            <person name="Kato I."/>
            <person name="Maruyama T."/>
        </authorList>
    </citation>
    <scope>NUCLEOTIDE SEQUENCE [LARGE SCALE GENOMIC DNA]</scope>
    <source>
        <strain>HA</strain>
    </source>
</reference>
<proteinExistence type="inferred from homology"/>
<sequence>MSDYKSSLNLPSTQFSMKANLANREGKFLKKWQNDRLYDQIRKQNQGKPKFVLHDGPIYANGDIHIGHAVNKVLKDIIVKSKSLSGFDAPYVPGWDCHGLPIELNVEKEYGKVGIKIDVNTFRYKCREYADHQVMRQSQDFQRLGILSDWDNPYLTKDFKYEADVVRALGQVVKNGHVYKGHKPLHWCTECGSALAEAEVEYKNKQSEAIDVKFRIIEDSVFNVKKPVSVVIWTTTPWTLPANEAVALHSELNYVLVDIGSEYLLLSQSLVVNSISRYDIKVTIGERMFSSSELEGLKVQHPFYDKQVPIILGDHVTIDSGTGAVHIAPAHGQEDFIAGLKYNLPIDCPVDAKGVFFKEILLLGGQFIFKANASVIRILKETNTLVKHESLTHSYPHCWRHKTPIIFRITSQWFISMQQNGLRDIVNSEIQKVQWIPHWSKKRIELMVDNRPDWCISRQRFWGVPITLFVHKKTGELHPNTQMLFVCIANRIEQEGIEAWFKSDTKDFIGDDVNDYDKITDILDVWFDSGMSHFVVLKVRKELSNVADLYLEGSDQHRGWFQSSLISSVAINKKAPYKNVLTHGFVVDKDGKKMSKSLGNIISPQKIVNNVGADILRLWIASTDYTGEMTVSDEILKRSADSYRRIRNTMRFMLANMNGFTQKNLVDTKAMLDLDRWIVAKTQKIQEAIIENYDTYQFHYIVKSINNFCSNDLGGFYLDIIKDRQYTTQKDSPARRSAQTALYHITQMMVRWLSPILSFTSEEIWQELAPNKKSIFLQEWYLQVDTIDNVVFDDGIIYGTMISSHISQEQREGLEKSDDIFTSINIVRIISPTIRQAIEKLRKDKVLGASLEAEVDIYCNLKVKEKLSKFGEELRFMFITSDVRLHSFEEKPNNAIEVDSDVLQQVAIVVVKSEHSKCVRCWHHRKDVGSNNKYLELCCRCVENVDGDGEVRKFA</sequence>
<evidence type="ECO:0000255" key="1">
    <source>
        <dbReference type="HAMAP-Rule" id="MF_02002"/>
    </source>
</evidence>
<accession>A5CX61</accession>
<comment type="function">
    <text evidence="1">Catalyzes the attachment of isoleucine to tRNA(Ile). As IleRS can inadvertently accommodate and process structurally similar amino acids such as valine, to avoid such errors it has two additional distinct tRNA(Ile)-dependent editing activities. One activity is designated as 'pretransfer' editing and involves the hydrolysis of activated Val-AMP. The other activity is designated 'posttransfer' editing and involves deacylation of mischarged Val-tRNA(Ile).</text>
</comment>
<comment type="catalytic activity">
    <reaction evidence="1">
        <text>tRNA(Ile) + L-isoleucine + ATP = L-isoleucyl-tRNA(Ile) + AMP + diphosphate</text>
        <dbReference type="Rhea" id="RHEA:11060"/>
        <dbReference type="Rhea" id="RHEA-COMP:9666"/>
        <dbReference type="Rhea" id="RHEA-COMP:9695"/>
        <dbReference type="ChEBI" id="CHEBI:30616"/>
        <dbReference type="ChEBI" id="CHEBI:33019"/>
        <dbReference type="ChEBI" id="CHEBI:58045"/>
        <dbReference type="ChEBI" id="CHEBI:78442"/>
        <dbReference type="ChEBI" id="CHEBI:78528"/>
        <dbReference type="ChEBI" id="CHEBI:456215"/>
        <dbReference type="EC" id="6.1.1.5"/>
    </reaction>
</comment>
<comment type="cofactor">
    <cofactor evidence="1">
        <name>Zn(2+)</name>
        <dbReference type="ChEBI" id="CHEBI:29105"/>
    </cofactor>
    <text evidence="1">Binds 1 zinc ion per subunit.</text>
</comment>
<comment type="subunit">
    <text evidence="1">Monomer.</text>
</comment>
<comment type="subcellular location">
    <subcellularLocation>
        <location evidence="1">Cytoplasm</location>
    </subcellularLocation>
</comment>
<comment type="domain">
    <text evidence="1">IleRS has two distinct active sites: one for aminoacylation and one for editing. The misactivated valine is translocated from the active site to the editing site, which sterically excludes the correctly activated isoleucine. The single editing site contains two valyl binding pockets, one specific for each substrate (Val-AMP or Val-tRNA(Ile)).</text>
</comment>
<comment type="similarity">
    <text evidence="1">Belongs to the class-I aminoacyl-tRNA synthetase family. IleS type 1 subfamily.</text>
</comment>
<protein>
    <recommendedName>
        <fullName evidence="1">Isoleucine--tRNA ligase</fullName>
        <ecNumber evidence="1">6.1.1.5</ecNumber>
    </recommendedName>
    <alternativeName>
        <fullName evidence="1">Isoleucyl-tRNA synthetase</fullName>
        <shortName evidence="1">IleRS</shortName>
    </alternativeName>
</protein>
<name>SYI_VESOH</name>